<sequence>MPLYVIDKPLTLHILTQLRDKNTDQINFRKNLVRLGRILGYEIANTLDYEIVEVETPLGARTKGIDITDLNNIVIINILRAAVPLVEGLLKAFPKARQGVIGASRVEVDGKEVPKDMDVYIYYKKIPNIRAKVDNVIIADPMIATASTMLKVLEEVVRANPKRIYIVSIISSEYGANKILSKYPFIYLFTVTIDPELNNKGYILPGLGDAGDRAFG</sequence>
<evidence type="ECO:0000255" key="1">
    <source>
        <dbReference type="HAMAP-Rule" id="MF_01218"/>
    </source>
</evidence>
<feature type="chain" id="PRO_1000213939" description="Uracil phosphoribosyltransferase">
    <location>
        <begin position="1"/>
        <end position="216"/>
    </location>
</feature>
<feature type="binding site" evidence="1">
    <location>
        <begin position="30"/>
        <end position="34"/>
    </location>
    <ligand>
        <name>GTP</name>
        <dbReference type="ChEBI" id="CHEBI:37565"/>
    </ligand>
</feature>
<feature type="binding site" evidence="1">
    <location>
        <position position="80"/>
    </location>
    <ligand>
        <name>5-phospho-alpha-D-ribose 1-diphosphate</name>
        <dbReference type="ChEBI" id="CHEBI:58017"/>
    </ligand>
</feature>
<feature type="binding site" evidence="1">
    <location>
        <position position="105"/>
    </location>
    <ligand>
        <name>5-phospho-alpha-D-ribose 1-diphosphate</name>
        <dbReference type="ChEBI" id="CHEBI:58017"/>
    </ligand>
</feature>
<feature type="binding site" evidence="1">
    <location>
        <begin position="140"/>
        <end position="148"/>
    </location>
    <ligand>
        <name>5-phospho-alpha-D-ribose 1-diphosphate</name>
        <dbReference type="ChEBI" id="CHEBI:58017"/>
    </ligand>
</feature>
<feature type="binding site" evidence="1">
    <location>
        <position position="203"/>
    </location>
    <ligand>
        <name>uracil</name>
        <dbReference type="ChEBI" id="CHEBI:17568"/>
    </ligand>
</feature>
<feature type="binding site" evidence="1">
    <location>
        <begin position="208"/>
        <end position="210"/>
    </location>
    <ligand>
        <name>uracil</name>
        <dbReference type="ChEBI" id="CHEBI:17568"/>
    </ligand>
</feature>
<feature type="binding site" evidence="1">
    <location>
        <position position="209"/>
    </location>
    <ligand>
        <name>5-phospho-alpha-D-ribose 1-diphosphate</name>
        <dbReference type="ChEBI" id="CHEBI:58017"/>
    </ligand>
</feature>
<dbReference type="EC" id="2.4.2.9" evidence="1"/>
<dbReference type="EMBL" id="CP001401">
    <property type="protein sequence ID" value="ACP55853.1"/>
    <property type="molecule type" value="Genomic_DNA"/>
</dbReference>
<dbReference type="RefSeq" id="WP_012711878.1">
    <property type="nucleotide sequence ID" value="NC_012632.1"/>
</dbReference>
<dbReference type="SMR" id="C3MZM1"/>
<dbReference type="GeneID" id="84059260"/>
<dbReference type="KEGG" id="sim:M1627_1982"/>
<dbReference type="HOGENOM" id="CLU_067096_2_0_2"/>
<dbReference type="UniPathway" id="UPA00574">
    <property type="reaction ID" value="UER00636"/>
</dbReference>
<dbReference type="Proteomes" id="UP000002307">
    <property type="component" value="Chromosome"/>
</dbReference>
<dbReference type="GO" id="GO:0005525">
    <property type="term" value="F:GTP binding"/>
    <property type="evidence" value="ECO:0007669"/>
    <property type="project" value="UniProtKB-KW"/>
</dbReference>
<dbReference type="GO" id="GO:0000287">
    <property type="term" value="F:magnesium ion binding"/>
    <property type="evidence" value="ECO:0007669"/>
    <property type="project" value="UniProtKB-UniRule"/>
</dbReference>
<dbReference type="GO" id="GO:0004845">
    <property type="term" value="F:uracil phosphoribosyltransferase activity"/>
    <property type="evidence" value="ECO:0007669"/>
    <property type="project" value="UniProtKB-UniRule"/>
</dbReference>
<dbReference type="GO" id="GO:0044206">
    <property type="term" value="P:UMP salvage"/>
    <property type="evidence" value="ECO:0007669"/>
    <property type="project" value="UniProtKB-UniRule"/>
</dbReference>
<dbReference type="GO" id="GO:0006223">
    <property type="term" value="P:uracil salvage"/>
    <property type="evidence" value="ECO:0007669"/>
    <property type="project" value="InterPro"/>
</dbReference>
<dbReference type="CDD" id="cd06223">
    <property type="entry name" value="PRTases_typeI"/>
    <property type="match status" value="1"/>
</dbReference>
<dbReference type="Gene3D" id="3.40.50.2020">
    <property type="match status" value="1"/>
</dbReference>
<dbReference type="HAMAP" id="MF_01218_A">
    <property type="entry name" value="Upp_A"/>
    <property type="match status" value="1"/>
</dbReference>
<dbReference type="InterPro" id="IPR000836">
    <property type="entry name" value="PRibTrfase_dom"/>
</dbReference>
<dbReference type="InterPro" id="IPR029057">
    <property type="entry name" value="PRTase-like"/>
</dbReference>
<dbReference type="InterPro" id="IPR034331">
    <property type="entry name" value="Upp_A"/>
</dbReference>
<dbReference type="InterPro" id="IPR005765">
    <property type="entry name" value="Ura_phspho_trans"/>
</dbReference>
<dbReference type="NCBIfam" id="NF001097">
    <property type="entry name" value="PRK00129.1"/>
    <property type="match status" value="1"/>
</dbReference>
<dbReference type="NCBIfam" id="TIGR01091">
    <property type="entry name" value="upp"/>
    <property type="match status" value="1"/>
</dbReference>
<dbReference type="Pfam" id="PF14681">
    <property type="entry name" value="UPRTase"/>
    <property type="match status" value="1"/>
</dbReference>
<dbReference type="SUPFAM" id="SSF53271">
    <property type="entry name" value="PRTase-like"/>
    <property type="match status" value="1"/>
</dbReference>
<protein>
    <recommendedName>
        <fullName evidence="1">Uracil phosphoribosyltransferase</fullName>
        <ecNumber evidence="1">2.4.2.9</ecNumber>
    </recommendedName>
    <alternativeName>
        <fullName evidence="1">UMP pyrophosphorylase</fullName>
    </alternativeName>
    <alternativeName>
        <fullName evidence="1">UPRTase</fullName>
    </alternativeName>
</protein>
<gene>
    <name evidence="1" type="primary">upp</name>
    <name type="ordered locus">M1627_1982</name>
</gene>
<proteinExistence type="inferred from homology"/>
<name>UPP_SACI3</name>
<organism>
    <name type="scientific">Saccharolobus islandicus (strain M.16.27)</name>
    <name type="common">Sulfolobus islandicus</name>
    <dbReference type="NCBI Taxonomy" id="427318"/>
    <lineage>
        <taxon>Archaea</taxon>
        <taxon>Thermoproteota</taxon>
        <taxon>Thermoprotei</taxon>
        <taxon>Sulfolobales</taxon>
        <taxon>Sulfolobaceae</taxon>
        <taxon>Saccharolobus</taxon>
    </lineage>
</organism>
<reference key="1">
    <citation type="journal article" date="2009" name="Proc. Natl. Acad. Sci. U.S.A.">
        <title>Biogeography of the Sulfolobus islandicus pan-genome.</title>
        <authorList>
            <person name="Reno M.L."/>
            <person name="Held N.L."/>
            <person name="Fields C.J."/>
            <person name="Burke P.V."/>
            <person name="Whitaker R.J."/>
        </authorList>
    </citation>
    <scope>NUCLEOTIDE SEQUENCE [LARGE SCALE GENOMIC DNA]</scope>
    <source>
        <strain>M.16.27</strain>
    </source>
</reference>
<accession>C3MZM1</accession>
<comment type="function">
    <text evidence="1">Catalyzes the conversion of uracil and 5-phospho-alpha-D-ribose 1-diphosphate (PRPP) to UMP and diphosphate.</text>
</comment>
<comment type="catalytic activity">
    <reaction evidence="1">
        <text>UMP + diphosphate = 5-phospho-alpha-D-ribose 1-diphosphate + uracil</text>
        <dbReference type="Rhea" id="RHEA:13017"/>
        <dbReference type="ChEBI" id="CHEBI:17568"/>
        <dbReference type="ChEBI" id="CHEBI:33019"/>
        <dbReference type="ChEBI" id="CHEBI:57865"/>
        <dbReference type="ChEBI" id="CHEBI:58017"/>
        <dbReference type="EC" id="2.4.2.9"/>
    </reaction>
</comment>
<comment type="cofactor">
    <cofactor evidence="1">
        <name>Mg(2+)</name>
        <dbReference type="ChEBI" id="CHEBI:18420"/>
    </cofactor>
    <text evidence="1">Binds 1 Mg(2+) ion per subunit. The magnesium is bound as Mg-PRPP.</text>
</comment>
<comment type="activity regulation">
    <text evidence="1">Allosterically activated by GTP.</text>
</comment>
<comment type="pathway">
    <text evidence="1">Pyrimidine metabolism; UMP biosynthesis via salvage pathway; UMP from uracil: step 1/1.</text>
</comment>
<comment type="similarity">
    <text evidence="1">Belongs to the UPRTase family.</text>
</comment>
<keyword id="KW-0021">Allosteric enzyme</keyword>
<keyword id="KW-0328">Glycosyltransferase</keyword>
<keyword id="KW-0342">GTP-binding</keyword>
<keyword id="KW-0460">Magnesium</keyword>
<keyword id="KW-0547">Nucleotide-binding</keyword>
<keyword id="KW-0808">Transferase</keyword>